<proteinExistence type="inferred from homology"/>
<accession>Q2YR56</accession>
<feature type="chain" id="PRO_1000007182" description="Large ribosomal subunit protein bL28">
    <location>
        <begin position="1"/>
        <end position="97"/>
    </location>
</feature>
<organism>
    <name type="scientific">Brucella abortus (strain 2308)</name>
    <dbReference type="NCBI Taxonomy" id="359391"/>
    <lineage>
        <taxon>Bacteria</taxon>
        <taxon>Pseudomonadati</taxon>
        <taxon>Pseudomonadota</taxon>
        <taxon>Alphaproteobacteria</taxon>
        <taxon>Hyphomicrobiales</taxon>
        <taxon>Brucellaceae</taxon>
        <taxon>Brucella/Ochrobactrum group</taxon>
        <taxon>Brucella</taxon>
    </lineage>
</organism>
<reference key="1">
    <citation type="journal article" date="2005" name="Infect. Immun.">
        <title>Whole-genome analyses of speciation events in pathogenic Brucellae.</title>
        <authorList>
            <person name="Chain P.S."/>
            <person name="Comerci D.J."/>
            <person name="Tolmasky M.E."/>
            <person name="Larimer F.W."/>
            <person name="Malfatti S.A."/>
            <person name="Vergez L.M."/>
            <person name="Aguero F."/>
            <person name="Land M.L."/>
            <person name="Ugalde R.A."/>
            <person name="Garcia E."/>
        </authorList>
    </citation>
    <scope>NUCLEOTIDE SEQUENCE [LARGE SCALE GENOMIC DNA]</scope>
    <source>
        <strain>2308</strain>
    </source>
</reference>
<name>RL28_BRUA2</name>
<evidence type="ECO:0000255" key="1">
    <source>
        <dbReference type="HAMAP-Rule" id="MF_00373"/>
    </source>
</evidence>
<evidence type="ECO:0000305" key="2"/>
<keyword id="KW-1185">Reference proteome</keyword>
<keyword id="KW-0687">Ribonucleoprotein</keyword>
<keyword id="KW-0689">Ribosomal protein</keyword>
<dbReference type="EMBL" id="AM040264">
    <property type="protein sequence ID" value="CAJ11972.1"/>
    <property type="molecule type" value="Genomic_DNA"/>
</dbReference>
<dbReference type="RefSeq" id="WP_002965079.1">
    <property type="nucleotide sequence ID" value="NZ_KN046823.1"/>
</dbReference>
<dbReference type="SMR" id="Q2YR56"/>
<dbReference type="STRING" id="359391.BAB1_2016"/>
<dbReference type="GeneID" id="97534716"/>
<dbReference type="KEGG" id="bmf:BAB1_2016"/>
<dbReference type="PATRIC" id="fig|359391.11.peg.1251"/>
<dbReference type="HOGENOM" id="CLU_064548_4_2_5"/>
<dbReference type="Proteomes" id="UP000002719">
    <property type="component" value="Chromosome I"/>
</dbReference>
<dbReference type="GO" id="GO:0022625">
    <property type="term" value="C:cytosolic large ribosomal subunit"/>
    <property type="evidence" value="ECO:0007669"/>
    <property type="project" value="TreeGrafter"/>
</dbReference>
<dbReference type="GO" id="GO:0003735">
    <property type="term" value="F:structural constituent of ribosome"/>
    <property type="evidence" value="ECO:0007669"/>
    <property type="project" value="InterPro"/>
</dbReference>
<dbReference type="GO" id="GO:0006412">
    <property type="term" value="P:translation"/>
    <property type="evidence" value="ECO:0007669"/>
    <property type="project" value="UniProtKB-UniRule"/>
</dbReference>
<dbReference type="Gene3D" id="2.30.170.40">
    <property type="entry name" value="Ribosomal protein L28/L24"/>
    <property type="match status" value="1"/>
</dbReference>
<dbReference type="HAMAP" id="MF_00373">
    <property type="entry name" value="Ribosomal_bL28"/>
    <property type="match status" value="1"/>
</dbReference>
<dbReference type="InterPro" id="IPR026569">
    <property type="entry name" value="Ribosomal_bL28"/>
</dbReference>
<dbReference type="InterPro" id="IPR034704">
    <property type="entry name" value="Ribosomal_bL28/bL31-like_sf"/>
</dbReference>
<dbReference type="InterPro" id="IPR001383">
    <property type="entry name" value="Ribosomal_bL28_bact-type"/>
</dbReference>
<dbReference type="InterPro" id="IPR037147">
    <property type="entry name" value="Ribosomal_bL28_sf"/>
</dbReference>
<dbReference type="NCBIfam" id="TIGR00009">
    <property type="entry name" value="L28"/>
    <property type="match status" value="1"/>
</dbReference>
<dbReference type="PANTHER" id="PTHR13528">
    <property type="entry name" value="39S RIBOSOMAL PROTEIN L28, MITOCHONDRIAL"/>
    <property type="match status" value="1"/>
</dbReference>
<dbReference type="PANTHER" id="PTHR13528:SF2">
    <property type="entry name" value="LARGE RIBOSOMAL SUBUNIT PROTEIN BL28M"/>
    <property type="match status" value="1"/>
</dbReference>
<dbReference type="Pfam" id="PF00830">
    <property type="entry name" value="Ribosomal_L28"/>
    <property type="match status" value="1"/>
</dbReference>
<dbReference type="SUPFAM" id="SSF143800">
    <property type="entry name" value="L28p-like"/>
    <property type="match status" value="1"/>
</dbReference>
<protein>
    <recommendedName>
        <fullName evidence="1">Large ribosomal subunit protein bL28</fullName>
    </recommendedName>
    <alternativeName>
        <fullName evidence="2">50S ribosomal protein L28</fullName>
    </alternativeName>
</protein>
<comment type="similarity">
    <text evidence="1">Belongs to the bacterial ribosomal protein bL28 family.</text>
</comment>
<sequence length="97" mass="10869">MSRACELTGKSVQYGNNVSHANNRTRRRFLPNLCNVTLISETLGQSYRLRISANALRSVEHRGGLDAFLVKSDDKELSQRARLLKRQIAKKQAEAAA</sequence>
<gene>
    <name evidence="1" type="primary">rpmB</name>
    <name type="ordered locus">BAB1_2016</name>
</gene>